<evidence type="ECO:0000256" key="1">
    <source>
        <dbReference type="SAM" id="MobiDB-lite"/>
    </source>
</evidence>
<evidence type="ECO:0000305" key="2"/>
<accession>B4PU14</accession>
<reference key="1">
    <citation type="journal article" date="2007" name="Nature">
        <title>Evolution of genes and genomes on the Drosophila phylogeny.</title>
        <authorList>
            <consortium name="Drosophila 12 genomes consortium"/>
        </authorList>
    </citation>
    <scope>NUCLEOTIDE SEQUENCE [LARGE SCALE GENOMIC DNA]</scope>
    <source>
        <strain>Tai18E2 / Tucson 14021-0261.01</strain>
    </source>
</reference>
<proteinExistence type="inferred from homology"/>
<keyword id="KW-0677">Repeat</keyword>
<keyword id="KW-0853">WD repeat</keyword>
<dbReference type="EMBL" id="CM000160">
    <property type="protein sequence ID" value="EDW97664.1"/>
    <property type="molecule type" value="Genomic_DNA"/>
</dbReference>
<dbReference type="SMR" id="B4PU14"/>
<dbReference type="EnsemblMetazoa" id="FBtr0270719">
    <property type="protein sequence ID" value="FBpp0269211"/>
    <property type="gene ID" value="FBgn0241332"/>
</dbReference>
<dbReference type="EnsemblMetazoa" id="XM_002097916.3">
    <property type="protein sequence ID" value="XP_002097952.1"/>
    <property type="gene ID" value="LOC6537396"/>
</dbReference>
<dbReference type="GeneID" id="6537396"/>
<dbReference type="KEGG" id="dya:Dyak_GE24201"/>
<dbReference type="eggNOG" id="KOG2444">
    <property type="taxonomic scope" value="Eukaryota"/>
</dbReference>
<dbReference type="HOGENOM" id="CLU_035848_1_0_1"/>
<dbReference type="OMA" id="QAIHPTE"/>
<dbReference type="OrthoDB" id="2288928at2759"/>
<dbReference type="PhylomeDB" id="B4PU14"/>
<dbReference type="Proteomes" id="UP000002282">
    <property type="component" value="Chromosome 3R"/>
</dbReference>
<dbReference type="GO" id="GO:0050829">
    <property type="term" value="P:defense response to Gram-negative bacterium"/>
    <property type="evidence" value="ECO:0007669"/>
    <property type="project" value="EnsemblMetazoa"/>
</dbReference>
<dbReference type="FunFam" id="2.130.10.10:FF:001280">
    <property type="entry name" value="WD repeat-containing protein 55 homolog"/>
    <property type="match status" value="1"/>
</dbReference>
<dbReference type="FunFam" id="2.130.10.10:FF:001796">
    <property type="entry name" value="WD repeat-containing protein 55 homolog"/>
    <property type="match status" value="1"/>
</dbReference>
<dbReference type="Gene3D" id="2.130.10.10">
    <property type="entry name" value="YVTN repeat-like/Quinoprotein amine dehydrogenase"/>
    <property type="match status" value="2"/>
</dbReference>
<dbReference type="InterPro" id="IPR015943">
    <property type="entry name" value="WD40/YVTN_repeat-like_dom_sf"/>
</dbReference>
<dbReference type="InterPro" id="IPR019775">
    <property type="entry name" value="WD40_repeat_CS"/>
</dbReference>
<dbReference type="InterPro" id="IPR036322">
    <property type="entry name" value="WD40_repeat_dom_sf"/>
</dbReference>
<dbReference type="InterPro" id="IPR001680">
    <property type="entry name" value="WD40_rpt"/>
</dbReference>
<dbReference type="InterPro" id="IPR050505">
    <property type="entry name" value="WDR55_POC1"/>
</dbReference>
<dbReference type="PANTHER" id="PTHR44019">
    <property type="entry name" value="WD REPEAT-CONTAINING PROTEIN 55"/>
    <property type="match status" value="1"/>
</dbReference>
<dbReference type="PANTHER" id="PTHR44019:SF20">
    <property type="entry name" value="WD REPEAT-CONTAINING PROTEIN 55"/>
    <property type="match status" value="1"/>
</dbReference>
<dbReference type="Pfam" id="PF24796">
    <property type="entry name" value="WDR55"/>
    <property type="match status" value="1"/>
</dbReference>
<dbReference type="SMART" id="SM00320">
    <property type="entry name" value="WD40"/>
    <property type="match status" value="5"/>
</dbReference>
<dbReference type="SUPFAM" id="SSF50978">
    <property type="entry name" value="WD40 repeat-like"/>
    <property type="match status" value="1"/>
</dbReference>
<dbReference type="PROSITE" id="PS00678">
    <property type="entry name" value="WD_REPEATS_1"/>
    <property type="match status" value="1"/>
</dbReference>
<dbReference type="PROSITE" id="PS50082">
    <property type="entry name" value="WD_REPEATS_2"/>
    <property type="match status" value="3"/>
</dbReference>
<dbReference type="PROSITE" id="PS50294">
    <property type="entry name" value="WD_REPEATS_REGION"/>
    <property type="match status" value="1"/>
</dbReference>
<feature type="chain" id="PRO_0000373968" description="WD repeat-containing protein 55 homolog">
    <location>
        <begin position="1"/>
        <end position="499"/>
    </location>
</feature>
<feature type="repeat" description="WD 1">
    <location>
        <begin position="154"/>
        <end position="193"/>
    </location>
</feature>
<feature type="repeat" description="WD 2">
    <location>
        <begin position="198"/>
        <end position="237"/>
    </location>
</feature>
<feature type="repeat" description="WD 3">
    <location>
        <begin position="241"/>
        <end position="279"/>
    </location>
</feature>
<feature type="repeat" description="WD 4">
    <location>
        <begin position="282"/>
        <end position="321"/>
    </location>
</feature>
<feature type="repeat" description="WD 5">
    <location>
        <begin position="324"/>
        <end position="363"/>
    </location>
</feature>
<feature type="repeat" description="WD 6">
    <location>
        <begin position="408"/>
        <end position="447"/>
    </location>
</feature>
<feature type="region of interest" description="Disordered" evidence="1">
    <location>
        <begin position="1"/>
        <end position="130"/>
    </location>
</feature>
<feature type="region of interest" description="Disordered" evidence="1">
    <location>
        <begin position="480"/>
        <end position="499"/>
    </location>
</feature>
<feature type="compositionally biased region" description="Acidic residues" evidence="1">
    <location>
        <begin position="12"/>
        <end position="23"/>
    </location>
</feature>
<feature type="compositionally biased region" description="Acidic residues" evidence="1">
    <location>
        <begin position="31"/>
        <end position="48"/>
    </location>
</feature>
<feature type="compositionally biased region" description="Low complexity" evidence="1">
    <location>
        <begin position="91"/>
        <end position="103"/>
    </location>
</feature>
<feature type="compositionally biased region" description="Polar residues" evidence="1">
    <location>
        <begin position="113"/>
        <end position="122"/>
    </location>
</feature>
<protein>
    <recommendedName>
        <fullName>WD repeat-containing protein 55 homolog</fullName>
    </recommendedName>
</protein>
<organism>
    <name type="scientific">Drosophila yakuba</name>
    <name type="common">Fruit fly</name>
    <dbReference type="NCBI Taxonomy" id="7245"/>
    <lineage>
        <taxon>Eukaryota</taxon>
        <taxon>Metazoa</taxon>
        <taxon>Ecdysozoa</taxon>
        <taxon>Arthropoda</taxon>
        <taxon>Hexapoda</taxon>
        <taxon>Insecta</taxon>
        <taxon>Pterygota</taxon>
        <taxon>Neoptera</taxon>
        <taxon>Endopterygota</taxon>
        <taxon>Diptera</taxon>
        <taxon>Brachycera</taxon>
        <taxon>Muscomorpha</taxon>
        <taxon>Ephydroidea</taxon>
        <taxon>Drosophilidae</taxon>
        <taxon>Drosophila</taxon>
        <taxon>Sophophora</taxon>
    </lineage>
</organism>
<gene>
    <name type="ORF">GE24201</name>
</gene>
<name>WDR55_DROYA</name>
<comment type="similarity">
    <text evidence="2">Belongs to the WD repeat WDR55 family.</text>
</comment>
<sequence length="499" mass="55518">MHTHNNFKTPSDEDELDDLDEDMVVGVIAEIEQEVLNESDSDNDEYDLVDMGAPVPENDGDSSYDGNESISSDDSFDPNAADSDSDDSMLDDAGGASAGGATSAKRRKDDDNPSGSNRQSEATFDLDVDDETDETVRAMIAAIKKPRSAPPEIKLEDFITDICFHPDRDIIALATIIGDVHLYEYDNEANKLLRTIEVHSKACRDVEFTEDGRFLLTCSKDKCVMVTDMETEKLKKLYETAHDDAINTLHVLNENLFATGDDAGTVKLWDLRTKNAIFELKELEDQITQLTTNDQNKLLLATSADGYLTTFNIAARKMYVQSEPYEEELSCMGIYRGDSKLVVGTSKGRLYTYNWGQFGYHCDMYPGIKSPISLMIPITDRIACLAGEDGNIRACHIAPYRNLGVVGQHNMPIESLDVNSSGELIASSSHNNDVRFWNVKYFEDFGDIKYNEKHNAYKEQRHNLPSSKCSNASDFFADLTKEDADDDDHDPSAGPSNMA</sequence>